<gene>
    <name evidence="1" type="primary">glyA</name>
    <name type="ordered locus">TK0528</name>
</gene>
<keyword id="KW-0028">Amino-acid biosynthesis</keyword>
<keyword id="KW-0963">Cytoplasm</keyword>
<keyword id="KW-0554">One-carbon metabolism</keyword>
<keyword id="KW-0663">Pyridoxal phosphate</keyword>
<keyword id="KW-1185">Reference proteome</keyword>
<keyword id="KW-0808">Transferase</keyword>
<protein>
    <recommendedName>
        <fullName evidence="1">Serine hydroxymethyltransferase</fullName>
        <shortName evidence="1">SHMT</shortName>
        <shortName evidence="1">Serine methylase</shortName>
        <ecNumber evidence="1">2.1.2.-</ecNumber>
    </recommendedName>
</protein>
<organism>
    <name type="scientific">Thermococcus kodakarensis (strain ATCC BAA-918 / JCM 12380 / KOD1)</name>
    <name type="common">Pyrococcus kodakaraensis (strain KOD1)</name>
    <dbReference type="NCBI Taxonomy" id="69014"/>
    <lineage>
        <taxon>Archaea</taxon>
        <taxon>Methanobacteriati</taxon>
        <taxon>Methanobacteriota</taxon>
        <taxon>Thermococci</taxon>
        <taxon>Thermococcales</taxon>
        <taxon>Thermococcaceae</taxon>
        <taxon>Thermococcus</taxon>
    </lineage>
</organism>
<comment type="function">
    <text evidence="1">Catalyzes the reversible interconversion of serine and glycine with a modified folate serving as the one-carbon carrier. Also exhibits a pteridine-independent aldolase activity toward beta-hydroxyamino acids, producing glycine and aldehydes, via a retro-aldol mechanism.</text>
</comment>
<comment type="cofactor">
    <cofactor evidence="1">
        <name>pyridoxal 5'-phosphate</name>
        <dbReference type="ChEBI" id="CHEBI:597326"/>
    </cofactor>
</comment>
<comment type="pathway">
    <text evidence="1">Amino-acid biosynthesis; glycine biosynthesis; glycine from L-serine: step 1/1.</text>
</comment>
<comment type="subunit">
    <text evidence="1">Homodimer.</text>
</comment>
<comment type="subcellular location">
    <subcellularLocation>
        <location evidence="1">Cytoplasm</location>
    </subcellularLocation>
</comment>
<comment type="similarity">
    <text evidence="1">Belongs to the SHMT family.</text>
</comment>
<dbReference type="EC" id="2.1.2.-" evidence="1"/>
<dbReference type="EMBL" id="AP006878">
    <property type="protein sequence ID" value="BAD84717.1"/>
    <property type="molecule type" value="Genomic_DNA"/>
</dbReference>
<dbReference type="RefSeq" id="WP_011249483.1">
    <property type="nucleotide sequence ID" value="NC_006624.1"/>
</dbReference>
<dbReference type="SMR" id="Q5JF06"/>
<dbReference type="FunCoup" id="Q5JF06">
    <property type="interactions" value="236"/>
</dbReference>
<dbReference type="STRING" id="69014.TK0528"/>
<dbReference type="EnsemblBacteria" id="BAD84717">
    <property type="protein sequence ID" value="BAD84717"/>
    <property type="gene ID" value="TK0528"/>
</dbReference>
<dbReference type="GeneID" id="78447041"/>
<dbReference type="KEGG" id="tko:TK0528"/>
<dbReference type="PATRIC" id="fig|69014.16.peg.518"/>
<dbReference type="eggNOG" id="arCOG00070">
    <property type="taxonomic scope" value="Archaea"/>
</dbReference>
<dbReference type="HOGENOM" id="CLU_022477_2_1_2"/>
<dbReference type="InParanoid" id="Q5JF06"/>
<dbReference type="OrthoDB" id="5821at2157"/>
<dbReference type="PhylomeDB" id="Q5JF06"/>
<dbReference type="UniPathway" id="UPA00288">
    <property type="reaction ID" value="UER01023"/>
</dbReference>
<dbReference type="Proteomes" id="UP000000536">
    <property type="component" value="Chromosome"/>
</dbReference>
<dbReference type="GO" id="GO:0005737">
    <property type="term" value="C:cytoplasm"/>
    <property type="evidence" value="ECO:0000318"/>
    <property type="project" value="GO_Central"/>
</dbReference>
<dbReference type="GO" id="GO:0004372">
    <property type="term" value="F:glycine hydroxymethyltransferase activity"/>
    <property type="evidence" value="ECO:0000318"/>
    <property type="project" value="GO_Central"/>
</dbReference>
<dbReference type="GO" id="GO:0030170">
    <property type="term" value="F:pyridoxal phosphate binding"/>
    <property type="evidence" value="ECO:0000318"/>
    <property type="project" value="GO_Central"/>
</dbReference>
<dbReference type="GO" id="GO:0019264">
    <property type="term" value="P:glycine biosynthetic process from serine"/>
    <property type="evidence" value="ECO:0000318"/>
    <property type="project" value="GO_Central"/>
</dbReference>
<dbReference type="GO" id="GO:0035999">
    <property type="term" value="P:tetrahydrofolate interconversion"/>
    <property type="evidence" value="ECO:0007669"/>
    <property type="project" value="InterPro"/>
</dbReference>
<dbReference type="GO" id="GO:0046653">
    <property type="term" value="P:tetrahydrofolate metabolic process"/>
    <property type="evidence" value="ECO:0000318"/>
    <property type="project" value="GO_Central"/>
</dbReference>
<dbReference type="CDD" id="cd00378">
    <property type="entry name" value="SHMT"/>
    <property type="match status" value="1"/>
</dbReference>
<dbReference type="FunFam" id="3.40.640.10:FF:000101">
    <property type="entry name" value="Serine hydroxymethyltransferase"/>
    <property type="match status" value="1"/>
</dbReference>
<dbReference type="FunFam" id="3.90.1150.10:FF:000114">
    <property type="entry name" value="Serine hydroxymethyltransferase"/>
    <property type="match status" value="1"/>
</dbReference>
<dbReference type="Gene3D" id="3.90.1150.10">
    <property type="entry name" value="Aspartate Aminotransferase, domain 1"/>
    <property type="match status" value="1"/>
</dbReference>
<dbReference type="Gene3D" id="3.40.640.10">
    <property type="entry name" value="Type I PLP-dependent aspartate aminotransferase-like (Major domain)"/>
    <property type="match status" value="1"/>
</dbReference>
<dbReference type="HAMAP" id="MF_00051">
    <property type="entry name" value="SHMT"/>
    <property type="match status" value="1"/>
</dbReference>
<dbReference type="InterPro" id="IPR015424">
    <property type="entry name" value="PyrdxlP-dep_Trfase"/>
</dbReference>
<dbReference type="InterPro" id="IPR015421">
    <property type="entry name" value="PyrdxlP-dep_Trfase_major"/>
</dbReference>
<dbReference type="InterPro" id="IPR015422">
    <property type="entry name" value="PyrdxlP-dep_Trfase_small"/>
</dbReference>
<dbReference type="InterPro" id="IPR001085">
    <property type="entry name" value="Ser_HO-MeTrfase"/>
</dbReference>
<dbReference type="InterPro" id="IPR049943">
    <property type="entry name" value="Ser_HO-MeTrfase-like"/>
</dbReference>
<dbReference type="InterPro" id="IPR019798">
    <property type="entry name" value="Ser_HO-MeTrfase_PLP_BS"/>
</dbReference>
<dbReference type="InterPro" id="IPR039429">
    <property type="entry name" value="SHMT-like_dom"/>
</dbReference>
<dbReference type="NCBIfam" id="NF000586">
    <property type="entry name" value="PRK00011.1"/>
    <property type="match status" value="1"/>
</dbReference>
<dbReference type="PANTHER" id="PTHR11680">
    <property type="entry name" value="SERINE HYDROXYMETHYLTRANSFERASE"/>
    <property type="match status" value="1"/>
</dbReference>
<dbReference type="PANTHER" id="PTHR11680:SF35">
    <property type="entry name" value="SERINE HYDROXYMETHYLTRANSFERASE 1"/>
    <property type="match status" value="1"/>
</dbReference>
<dbReference type="Pfam" id="PF00464">
    <property type="entry name" value="SHMT"/>
    <property type="match status" value="1"/>
</dbReference>
<dbReference type="PIRSF" id="PIRSF000412">
    <property type="entry name" value="SHMT"/>
    <property type="match status" value="1"/>
</dbReference>
<dbReference type="SUPFAM" id="SSF53383">
    <property type="entry name" value="PLP-dependent transferases"/>
    <property type="match status" value="1"/>
</dbReference>
<dbReference type="PROSITE" id="PS00096">
    <property type="entry name" value="SHMT"/>
    <property type="match status" value="1"/>
</dbReference>
<evidence type="ECO:0000255" key="1">
    <source>
        <dbReference type="HAMAP-Rule" id="MF_00051"/>
    </source>
</evidence>
<feature type="chain" id="PRO_0000113723" description="Serine hydroxymethyltransferase">
    <location>
        <begin position="1"/>
        <end position="431"/>
    </location>
</feature>
<feature type="binding site" evidence="1">
    <location>
        <begin position="122"/>
        <end position="124"/>
    </location>
    <ligand>
        <name>(6S)-5,6,7,8-tetrahydrofolate</name>
        <dbReference type="ChEBI" id="CHEBI:57453"/>
    </ligand>
</feature>
<feature type="binding site" evidence="1">
    <location>
        <position position="245"/>
    </location>
    <ligand>
        <name>(6S)-5,6,7,8-tetrahydrofolate</name>
        <dbReference type="ChEBI" id="CHEBI:57453"/>
    </ligand>
</feature>
<feature type="site" description="Plays an important role in substrate specificity" evidence="1">
    <location>
        <position position="227"/>
    </location>
</feature>
<feature type="modified residue" description="N6-(pyridoxal phosphate)lysine" evidence="1">
    <location>
        <position position="228"/>
    </location>
</feature>
<accession>Q5JF06</accession>
<name>GLYA_THEKO</name>
<reference key="1">
    <citation type="journal article" date="2005" name="Genome Res.">
        <title>Complete genome sequence of the hyperthermophilic archaeon Thermococcus kodakaraensis KOD1 and comparison with Pyrococcus genomes.</title>
        <authorList>
            <person name="Fukui T."/>
            <person name="Atomi H."/>
            <person name="Kanai T."/>
            <person name="Matsumi R."/>
            <person name="Fujiwara S."/>
            <person name="Imanaka T."/>
        </authorList>
    </citation>
    <scope>NUCLEOTIDE SEQUENCE [LARGE SCALE GENOMIC DNA]</scope>
    <source>
        <strain>ATCC BAA-918 / JCM 12380 / KOD1</strain>
    </source>
</reference>
<sequence>MAEGYREYRDKVLGFIEDHENWRKHTINLIASENVTSPSVTRAVASGFMHKYAEGWPKQRYYQGCKYVDEVELIGVELFTKLFGSDFADLRPISGTNANQAVFFGLTQPGDKAIVLHTSHGGHISHMPFGAAGMRGLEVHTWPFDNEEFNIDVDKAEKLIREVEPKIVVFGGSLFPFPHPVKELAPVAKEVGAYVMYDGAHVLGLIAGKQFQDPLREGADIITASTHKTFPGPQGGVIIYKRFGETEEIAKLQWAIFPGVLSNHHLHHMAGKVITAAEMLEYGEKYAAQIVKNAKALAEALAEEGFKVIGEDKGYTESHQVIVDVSDLHPAAGGWAAPLLEEAGIILNKNLLPWDPLEKVNEPSGLRIGVQEMTRVGMMEDEMKEIARFIRRVLIDKEDPAKVRRDVYGFRAEYQKVYYSFDHGLPLRLRE</sequence>
<proteinExistence type="inferred from homology"/>